<keyword id="KW-0244">Early protein</keyword>
<organism>
    <name type="scientific">African swine fever virus (isolate Warthog/Namibia/Wart80/1980)</name>
    <name type="common">ASFV</name>
    <dbReference type="NCBI Taxonomy" id="561444"/>
    <lineage>
        <taxon>Viruses</taxon>
        <taxon>Varidnaviria</taxon>
        <taxon>Bamfordvirae</taxon>
        <taxon>Nucleocytoviricota</taxon>
        <taxon>Pokkesviricetes</taxon>
        <taxon>Asfuvirales</taxon>
        <taxon>Asfarviridae</taxon>
        <taxon>Asfivirus</taxon>
        <taxon>African swine fever virus</taxon>
    </lineage>
</organism>
<evidence type="ECO:0000250" key="1">
    <source>
        <dbReference type="UniProtKB" id="P23163"/>
    </source>
</evidence>
<evidence type="ECO:0000305" key="2"/>
<reference key="1">
    <citation type="submission" date="2003-03" db="EMBL/GenBank/DDBJ databases">
        <title>African swine fever virus genomes.</title>
        <authorList>
            <person name="Kutish G.F."/>
            <person name="Rock D.L."/>
        </authorList>
    </citation>
    <scope>NUCLEOTIDE SEQUENCE [LARGE SCALE GENOMIC DNA]</scope>
</reference>
<dbReference type="EMBL" id="AY261366">
    <property type="status" value="NOT_ANNOTATED_CDS"/>
    <property type="molecule type" value="Genomic_DNA"/>
</dbReference>
<dbReference type="SMR" id="P0C9R2"/>
<dbReference type="Proteomes" id="UP000000858">
    <property type="component" value="Segment"/>
</dbReference>
<dbReference type="GO" id="GO:0042330">
    <property type="term" value="P:taxis"/>
    <property type="evidence" value="ECO:0007669"/>
    <property type="project" value="InterPro"/>
</dbReference>
<dbReference type="InterPro" id="IPR002595">
    <property type="entry name" value="ASFV_MGF360"/>
</dbReference>
<dbReference type="Pfam" id="PF01671">
    <property type="entry name" value="ASFV_360"/>
    <property type="match status" value="1"/>
</dbReference>
<accession>P0C9R2</accession>
<name>36016_ASFWA</name>
<gene>
    <name type="ordered locus">War-158</name>
</gene>
<sequence length="352" mass="40560">MLSLQTIAKMAVATNTYSKCHYPILKVFGLWWKNNTLNGPIKICNHCNNIMVGEYPMCYNHGMSLDIALIRAVKERNISLVQLFTEWGGNIDYGALCANTPSMQRLCKSLGAKPPKGRMYMDALIHLSDTLNDNDLIRGYEIFDDNSVLDCVNLIRLKIMLTLKARIPLMEQLDQIALKQLLQRYWYAMAVQHNLTTAIHYFNNHIPNIKPFGLRCALYFNDPFKIHDACRTVNMDPNEMMNIACQQDLNFQSIYYCYLLGADINQAMLMSLKYGHLSNMWFCIDLGADAFKEAGVLAEKKNRRVLQHILGLNIFKRELIPPCKDPDPYQIQILLKNYILKNVSTVFTYYCQ</sequence>
<feature type="chain" id="PRO_0000373297" description="Protein MGF 360-16R">
    <location>
        <begin position="1"/>
        <end position="352"/>
    </location>
</feature>
<proteinExistence type="inferred from homology"/>
<organismHost>
    <name type="scientific">Ornithodoros</name>
    <name type="common">relapsing fever ticks</name>
    <dbReference type="NCBI Taxonomy" id="6937"/>
</organismHost>
<organismHost>
    <name type="scientific">Phacochoerus aethiopicus</name>
    <name type="common">Warthog</name>
    <dbReference type="NCBI Taxonomy" id="85517"/>
</organismHost>
<organismHost>
    <name type="scientific">Phacochoerus africanus</name>
    <name type="common">Warthog</name>
    <dbReference type="NCBI Taxonomy" id="41426"/>
</organismHost>
<organismHost>
    <name type="scientific">Potamochoerus larvatus</name>
    <name type="common">Bushpig</name>
    <dbReference type="NCBI Taxonomy" id="273792"/>
</organismHost>
<organismHost>
    <name type="scientific">Sus scrofa</name>
    <name type="common">Pig</name>
    <dbReference type="NCBI Taxonomy" id="9823"/>
</organismHost>
<protein>
    <recommendedName>
        <fullName>Protein MGF 360-16R</fullName>
    </recommendedName>
</protein>
<comment type="function">
    <text evidence="1">Plays a role in virus cell tropism, and may be required for efficient virus replication in macrophages.</text>
</comment>
<comment type="induction">
    <text evidence="2">Expressed in the early phase of the viral replicative cycle.</text>
</comment>
<comment type="similarity">
    <text evidence="2">Belongs to the asfivirus MGF 360 family.</text>
</comment>